<evidence type="ECO:0000250" key="1"/>
<evidence type="ECO:0000250" key="2">
    <source>
        <dbReference type="UniProtKB" id="P07953"/>
    </source>
</evidence>
<evidence type="ECO:0000255" key="3"/>
<evidence type="ECO:0000256" key="4">
    <source>
        <dbReference type="SAM" id="MobiDB-lite"/>
    </source>
</evidence>
<evidence type="ECO:0000269" key="5">
    <source>
    </source>
</evidence>
<evidence type="ECO:0000269" key="6">
    <source>
    </source>
</evidence>
<evidence type="ECO:0000269" key="7">
    <source>
    </source>
</evidence>
<evidence type="ECO:0000269" key="8">
    <source>
    </source>
</evidence>
<evidence type="ECO:0000269" key="9">
    <source>
    </source>
</evidence>
<evidence type="ECO:0000269" key="10">
    <source>
    </source>
</evidence>
<evidence type="ECO:0000269" key="11">
    <source>
    </source>
</evidence>
<evidence type="ECO:0000303" key="12">
    <source>
    </source>
</evidence>
<evidence type="ECO:0000303" key="13">
    <source>
    </source>
</evidence>
<evidence type="ECO:0000305" key="14"/>
<evidence type="ECO:0000305" key="15">
    <source>
    </source>
</evidence>
<evidence type="ECO:0000305" key="16">
    <source>
    </source>
</evidence>
<evidence type="ECO:0000305" key="17">
    <source>
    </source>
</evidence>
<evidence type="ECO:0000305" key="18">
    <source>
    </source>
</evidence>
<evidence type="ECO:0007744" key="19">
    <source>
    </source>
</evidence>
<evidence type="ECO:0007744" key="20">
    <source>
    </source>
</evidence>
<evidence type="ECO:0007744" key="21">
    <source>
    </source>
</evidence>
<evidence type="ECO:0007744" key="22">
    <source>
    </source>
</evidence>
<evidence type="ECO:0007829" key="23">
    <source>
        <dbReference type="PDB" id="2AXN"/>
    </source>
</evidence>
<evidence type="ECO:0007829" key="24">
    <source>
        <dbReference type="PDB" id="3QPU"/>
    </source>
</evidence>
<evidence type="ECO:0007829" key="25">
    <source>
        <dbReference type="PDB" id="4D4M"/>
    </source>
</evidence>
<evidence type="ECO:0007829" key="26">
    <source>
        <dbReference type="PDB" id="6HVI"/>
    </source>
</evidence>
<evidence type="ECO:0007829" key="27">
    <source>
        <dbReference type="PDB" id="6HVJ"/>
    </source>
</evidence>
<evidence type="ECO:0007829" key="28">
    <source>
        <dbReference type="PDB" id="6IBZ"/>
    </source>
</evidence>
<proteinExistence type="evidence at protein level"/>
<comment type="function">
    <text evidence="5 8 16">Catalyzes both the synthesis and degradation of fructose 2,6-bisphosphate.</text>
</comment>
<comment type="catalytic activity">
    <reaction evidence="16 17 18">
        <text>beta-D-fructose 2,6-bisphosphate + H2O = beta-D-fructose 6-phosphate + phosphate</text>
        <dbReference type="Rhea" id="RHEA:17289"/>
        <dbReference type="ChEBI" id="CHEBI:15377"/>
        <dbReference type="ChEBI" id="CHEBI:43474"/>
        <dbReference type="ChEBI" id="CHEBI:57634"/>
        <dbReference type="ChEBI" id="CHEBI:58579"/>
        <dbReference type="EC" id="3.1.3.46"/>
    </reaction>
    <physiologicalReaction direction="left-to-right" evidence="16">
        <dbReference type="Rhea" id="RHEA:17290"/>
    </physiologicalReaction>
</comment>
<comment type="catalytic activity">
    <reaction evidence="5 8 16">
        <text>beta-D-fructose 6-phosphate + ATP = beta-D-fructose 2,6-bisphosphate + ADP + H(+)</text>
        <dbReference type="Rhea" id="RHEA:15653"/>
        <dbReference type="ChEBI" id="CHEBI:15378"/>
        <dbReference type="ChEBI" id="CHEBI:30616"/>
        <dbReference type="ChEBI" id="CHEBI:57634"/>
        <dbReference type="ChEBI" id="CHEBI:58579"/>
        <dbReference type="ChEBI" id="CHEBI:456216"/>
        <dbReference type="EC" id="2.7.1.105"/>
    </reaction>
    <physiologicalReaction direction="left-to-right" evidence="15">
        <dbReference type="Rhea" id="RHEA:15654"/>
    </physiologicalReaction>
</comment>
<comment type="biophysicochemical properties">
    <kinetics>
        <KM evidence="8">10.2 uM for fructose 6-phosphate</KM>
        <KM evidence="8">16.9 uM for ATP</KM>
    </kinetics>
</comment>
<comment type="subunit">
    <text evidence="7 11">Homodimer (PubMed:16316985). Forms a heterodimer with PFKFB2 (PubMed:36402789).</text>
</comment>
<comment type="interaction">
    <interactant intactId="EBI-764464">
        <id>Q16875</id>
    </interactant>
    <interactant intactId="EBI-709807">
        <id>P16118</id>
        <label>PFKFB1</label>
    </interactant>
    <organismsDiffer>false</organismsDiffer>
    <experiments>3</experiments>
</comment>
<comment type="alternative products">
    <event type="alternative splicing"/>
    <isoform>
        <id>Q16875-1</id>
        <name>1</name>
        <sequence type="displayed"/>
    </isoform>
    <isoform>
        <id>Q16875-2</id>
        <name>2</name>
        <sequence type="described" ref="VSP_004680"/>
    </isoform>
    <isoform>
        <id>Q16875-3</id>
        <name>3</name>
        <sequence type="described" ref="VSP_047165"/>
    </isoform>
    <isoform>
        <id>Q16875-4</id>
        <name>4</name>
        <sequence type="described" ref="VSP_054549"/>
    </isoform>
</comment>
<comment type="tissue specificity">
    <text>Ubiquitous.</text>
</comment>
<comment type="PTM">
    <text evidence="6">Phosphorylation by AMPK stimulates activity.</text>
</comment>
<comment type="similarity">
    <text evidence="14">In the C-terminal section; belongs to the phosphoglycerate mutase family.</text>
</comment>
<name>F263_HUMAN</name>
<feature type="chain" id="PRO_0000179968" description="6-phosphofructo-2-kinase/fructose-2,6-bisphosphatase 3">
    <location>
        <begin position="1"/>
        <end position="520"/>
    </location>
</feature>
<feature type="region of interest" description="6-phosphofructo-2-kinase">
    <location>
        <begin position="1"/>
        <end position="245"/>
    </location>
</feature>
<feature type="region of interest" description="Fructose-2,6-bisphosphatase">
    <location>
        <begin position="246"/>
        <end position="520"/>
    </location>
</feature>
<feature type="region of interest" description="Disordered" evidence="4">
    <location>
        <begin position="443"/>
        <end position="520"/>
    </location>
</feature>
<feature type="compositionally biased region" description="Polar residues" evidence="4">
    <location>
        <begin position="502"/>
        <end position="520"/>
    </location>
</feature>
<feature type="active site" evidence="3">
    <location>
        <position position="125"/>
    </location>
</feature>
<feature type="active site" evidence="3">
    <location>
        <position position="155"/>
    </location>
</feature>
<feature type="active site" description="Tele-phosphohistidine intermediate" evidence="9">
    <location>
        <position position="254"/>
    </location>
</feature>
<feature type="active site" description="Proton donor/acceptor" evidence="9">
    <location>
        <position position="323"/>
    </location>
</feature>
<feature type="binding site" evidence="7 8 9">
    <location>
        <begin position="42"/>
        <end position="50"/>
    </location>
    <ligand>
        <name>ATP</name>
        <dbReference type="ChEBI" id="CHEBI:30616"/>
    </ligand>
</feature>
<feature type="binding site" evidence="7">
    <location>
        <position position="75"/>
    </location>
    <ligand>
        <name>beta-D-fructose 6-phosphate</name>
        <dbReference type="ChEBI" id="CHEBI:57634"/>
    </ligand>
</feature>
<feature type="binding site" evidence="7">
    <location>
        <position position="99"/>
    </location>
    <ligand>
        <name>beta-D-fructose 6-phosphate</name>
        <dbReference type="ChEBI" id="CHEBI:57634"/>
    </ligand>
</feature>
<feature type="binding site" evidence="7">
    <location>
        <position position="127"/>
    </location>
    <ligand>
        <name>beta-D-fructose 6-phosphate</name>
        <dbReference type="ChEBI" id="CHEBI:57634"/>
    </ligand>
</feature>
<feature type="binding site" evidence="7">
    <location>
        <position position="133"/>
    </location>
    <ligand>
        <name>beta-D-fructose 6-phosphate</name>
        <dbReference type="ChEBI" id="CHEBI:57634"/>
    </ligand>
</feature>
<feature type="binding site" evidence="7 8 9">
    <location>
        <begin position="164"/>
        <end position="169"/>
    </location>
    <ligand>
        <name>ATP</name>
        <dbReference type="ChEBI" id="CHEBI:30616"/>
    </ligand>
</feature>
<feature type="binding site" evidence="7">
    <location>
        <position position="169"/>
    </location>
    <ligand>
        <name>beta-D-fructose 6-phosphate</name>
        <dbReference type="ChEBI" id="CHEBI:57634"/>
    </ligand>
</feature>
<feature type="binding site" evidence="7">
    <location>
        <position position="190"/>
    </location>
    <ligand>
        <name>beta-D-fructose 6-phosphate</name>
        <dbReference type="ChEBI" id="CHEBI:57634"/>
    </ligand>
</feature>
<feature type="binding site" evidence="7">
    <location>
        <position position="194"/>
    </location>
    <ligand>
        <name>beta-D-fructose 6-phosphate</name>
        <dbReference type="ChEBI" id="CHEBI:57634"/>
    </ligand>
</feature>
<feature type="binding site" evidence="10">
    <location>
        <position position="253"/>
    </location>
    <ligand>
        <name>beta-D-fructose 2,6-bisphosphate</name>
        <dbReference type="ChEBI" id="CHEBI:58579"/>
    </ligand>
</feature>
<feature type="binding site" evidence="10">
    <location>
        <position position="260"/>
    </location>
    <ligand>
        <name>beta-D-fructose 2,6-bisphosphate</name>
        <dbReference type="ChEBI" id="CHEBI:58579"/>
    </ligand>
</feature>
<feature type="binding site" evidence="10">
    <location>
        <position position="266"/>
    </location>
    <ligand>
        <name>beta-D-fructose 2,6-bisphosphate</name>
        <dbReference type="ChEBI" id="CHEBI:58579"/>
    </ligand>
</feature>
<feature type="binding site" evidence="10">
    <location>
        <position position="334"/>
    </location>
    <ligand>
        <name>beta-D-fructose 2,6-bisphosphate</name>
        <dbReference type="ChEBI" id="CHEBI:58579"/>
    </ligand>
</feature>
<feature type="binding site" evidence="2">
    <location>
        <begin position="345"/>
        <end position="348"/>
    </location>
    <ligand>
        <name>ATP</name>
        <dbReference type="ChEBI" id="CHEBI:30616"/>
    </ligand>
</feature>
<feature type="binding site" evidence="10">
    <location>
        <position position="348"/>
    </location>
    <ligand>
        <name>beta-D-fructose 2,6-bisphosphate</name>
        <dbReference type="ChEBI" id="CHEBI:58579"/>
    </ligand>
</feature>
<feature type="binding site" evidence="10">
    <location>
        <position position="352"/>
    </location>
    <ligand>
        <name>beta-D-fructose 2,6-bisphosphate</name>
        <dbReference type="ChEBI" id="CHEBI:58579"/>
    </ligand>
</feature>
<feature type="binding site" evidence="10">
    <location>
        <position position="363"/>
    </location>
    <ligand>
        <name>beta-D-fructose 2,6-bisphosphate</name>
        <dbReference type="ChEBI" id="CHEBI:58579"/>
    </ligand>
</feature>
<feature type="binding site" evidence="2">
    <location>
        <begin position="389"/>
        <end position="393"/>
    </location>
    <ligand>
        <name>ATP</name>
        <dbReference type="ChEBI" id="CHEBI:30616"/>
    </ligand>
</feature>
<feature type="binding site" evidence="10">
    <location>
        <position position="389"/>
    </location>
    <ligand>
        <name>beta-D-fructose 2,6-bisphosphate</name>
        <dbReference type="ChEBI" id="CHEBI:58579"/>
    </ligand>
</feature>
<feature type="binding site" evidence="2">
    <location>
        <position position="393"/>
    </location>
    <ligand>
        <name>beta-D-fructose 2,6-bisphosphate</name>
        <dbReference type="ChEBI" id="CHEBI:58579"/>
    </ligand>
</feature>
<feature type="binding site" evidence="7 8 9">
    <location>
        <position position="425"/>
    </location>
    <ligand>
        <name>ATP</name>
        <dbReference type="ChEBI" id="CHEBI:30616"/>
    </ligand>
</feature>
<feature type="site" description="Transition state stabilizer" evidence="9">
    <location>
        <position position="253"/>
    </location>
</feature>
<feature type="site" description="Transition state stabilizer" evidence="9">
    <location>
        <position position="260"/>
    </location>
</feature>
<feature type="site" description="Transition state stabilizer" evidence="9">
    <location>
        <position position="388"/>
    </location>
</feature>
<feature type="modified residue" description="Phosphoserine; by AMPK" evidence="6 19 20 21 22">
    <location>
        <position position="461"/>
    </location>
</feature>
<feature type="modified residue" description="Phosphothreonine" evidence="19">
    <location>
        <position position="463"/>
    </location>
</feature>
<feature type="modified residue" description="Phosphoserine" evidence="19 20 21">
    <location>
        <position position="467"/>
    </location>
</feature>
<feature type="modified residue" description="Phosphothreonine; by PKC" evidence="1">
    <location>
        <position position="471"/>
    </location>
</feature>
<feature type="splice variant" id="VSP_047165" description="In isoform 3." evidence="14">
    <original>MPLELTQSRVQKIWVPVDHRPSLPRS</original>
    <variation>MPFRKA</variation>
    <location>
        <begin position="1"/>
        <end position="26"/>
    </location>
</feature>
<feature type="splice variant" id="VSP_054549" description="In isoform 4." evidence="13">
    <original>MPLELTQSRVQKIWVPVDHRPSLPRS</original>
    <variation>MGEGGQKEGDSQQAGALPLLCQLDTFSPKATVFGVSINPA</variation>
    <location>
        <begin position="1"/>
        <end position="26"/>
    </location>
</feature>
<feature type="splice variant" id="VSP_004680" description="In isoform 2." evidence="12">
    <original>NMKGSRSSADSSRKH</original>
    <variation>PLLGQACLT</variation>
    <location>
        <begin position="506"/>
        <end position="520"/>
    </location>
</feature>
<feature type="mutagenesis site" description="20-fold decrease in Km for ATP and 3-fold decrease in Km for fructose-6 phsphate." evidence="8">
    <original>A</original>
    <variation>G</variation>
    <location>
        <position position="45"/>
    </location>
</feature>
<feature type="mutagenesis site" description="Loss of activity." evidence="8">
    <original>K</original>
    <variation>R</variation>
    <variation>A</variation>
    <variation>N</variation>
    <location>
        <position position="169"/>
    </location>
</feature>
<feature type="sequence conflict" description="In Ref. 4; AAB99795." evidence="14" ref="4">
    <original>M</original>
    <variation>V</variation>
    <location>
        <position position="136"/>
    </location>
</feature>
<feature type="sequence conflict" description="In Ref. 5; AAC62000." evidence="14" ref="5">
    <original>A</original>
    <variation>G</variation>
    <location>
        <position position="141"/>
    </location>
</feature>
<feature type="strand" evidence="26">
    <location>
        <begin position="5"/>
        <end position="7"/>
    </location>
</feature>
<feature type="turn" evidence="26">
    <location>
        <begin position="9"/>
        <end position="11"/>
    </location>
</feature>
<feature type="strand" evidence="26">
    <location>
        <begin position="14"/>
        <end position="16"/>
    </location>
</feature>
<feature type="strand" evidence="26">
    <location>
        <begin position="36"/>
        <end position="41"/>
    </location>
</feature>
<feature type="strand" evidence="28">
    <location>
        <begin position="43"/>
        <end position="47"/>
    </location>
</feature>
<feature type="helix" evidence="26">
    <location>
        <begin position="48"/>
        <end position="61"/>
    </location>
</feature>
<feature type="strand" evidence="26">
    <location>
        <begin position="66"/>
        <end position="70"/>
    </location>
</feature>
<feature type="helix" evidence="26">
    <location>
        <begin position="71"/>
        <end position="78"/>
    </location>
</feature>
<feature type="strand" evidence="25">
    <location>
        <begin position="79"/>
        <end position="81"/>
    </location>
</feature>
<feature type="helix" evidence="26">
    <location>
        <begin position="85"/>
        <end position="88"/>
    </location>
</feature>
<feature type="helix" evidence="26">
    <location>
        <begin position="93"/>
        <end position="116"/>
    </location>
</feature>
<feature type="strand" evidence="26">
    <location>
        <begin position="120"/>
        <end position="126"/>
    </location>
</feature>
<feature type="helix" evidence="26">
    <location>
        <begin position="131"/>
        <end position="143"/>
    </location>
</feature>
<feature type="strand" evidence="26">
    <location>
        <begin position="147"/>
        <end position="154"/>
    </location>
</feature>
<feature type="helix" evidence="26">
    <location>
        <begin position="158"/>
        <end position="168"/>
    </location>
</feature>
<feature type="turn" evidence="26">
    <location>
        <begin position="169"/>
        <end position="171"/>
    </location>
</feature>
<feature type="helix" evidence="26">
    <location>
        <begin position="173"/>
        <end position="175"/>
    </location>
</feature>
<feature type="strand" evidence="27">
    <location>
        <begin position="176"/>
        <end position="178"/>
    </location>
</feature>
<feature type="helix" evidence="26">
    <location>
        <begin position="180"/>
        <end position="195"/>
    </location>
</feature>
<feature type="turn" evidence="26">
    <location>
        <begin position="203"/>
        <end position="209"/>
    </location>
</feature>
<feature type="strand" evidence="26">
    <location>
        <begin position="212"/>
        <end position="216"/>
    </location>
</feature>
<feature type="turn" evidence="26">
    <location>
        <begin position="217"/>
        <end position="220"/>
    </location>
</feature>
<feature type="strand" evidence="26">
    <location>
        <begin position="221"/>
        <end position="225"/>
    </location>
</feature>
<feature type="helix" evidence="26">
    <location>
        <begin position="230"/>
        <end position="241"/>
    </location>
</feature>
<feature type="strand" evidence="26">
    <location>
        <begin position="249"/>
        <end position="253"/>
    </location>
</feature>
<feature type="helix" evidence="26">
    <location>
        <begin position="258"/>
        <end position="261"/>
    </location>
</feature>
<feature type="helix" evidence="26">
    <location>
        <begin position="273"/>
        <end position="289"/>
    </location>
</feature>
<feature type="strand" evidence="26">
    <location>
        <begin position="295"/>
        <end position="298"/>
    </location>
</feature>
<feature type="helix" evidence="26">
    <location>
        <begin position="302"/>
        <end position="309"/>
    </location>
</feature>
<feature type="turn" evidence="26">
    <location>
        <begin position="310"/>
        <end position="312"/>
    </location>
</feature>
<feature type="strand" evidence="23">
    <location>
        <begin position="315"/>
        <end position="317"/>
    </location>
</feature>
<feature type="helix" evidence="26">
    <location>
        <begin position="319"/>
        <end position="321"/>
    </location>
</feature>
<feature type="helix" evidence="26">
    <location>
        <begin position="327"/>
        <end position="329"/>
    </location>
</feature>
<feature type="helix" evidence="26">
    <location>
        <begin position="334"/>
        <end position="340"/>
    </location>
</feature>
<feature type="helix" evidence="26">
    <location>
        <begin position="342"/>
        <end position="350"/>
    </location>
</feature>
<feature type="turn" evidence="26">
    <location>
        <begin position="352"/>
        <end position="354"/>
    </location>
</feature>
<feature type="helix" evidence="26">
    <location>
        <begin position="363"/>
        <end position="379"/>
    </location>
</feature>
<feature type="strand" evidence="26">
    <location>
        <begin position="381"/>
        <end position="387"/>
    </location>
</feature>
<feature type="helix" evidence="26">
    <location>
        <begin position="389"/>
        <end position="400"/>
    </location>
</feature>
<feature type="turn" evidence="26">
    <location>
        <begin position="404"/>
        <end position="406"/>
    </location>
</feature>
<feature type="helix" evidence="26">
    <location>
        <begin position="407"/>
        <end position="409"/>
    </location>
</feature>
<feature type="strand" evidence="26">
    <location>
        <begin position="416"/>
        <end position="423"/>
    </location>
</feature>
<feature type="strand" evidence="26">
    <location>
        <begin position="426"/>
        <end position="433"/>
    </location>
</feature>
<feature type="helix" evidence="24">
    <location>
        <begin position="442"/>
        <end position="446"/>
    </location>
</feature>
<feature type="helix" evidence="23">
    <location>
        <begin position="455"/>
        <end position="457"/>
    </location>
</feature>
<accession>Q16875</accession>
<accession>B7Z955</accession>
<accession>O43622</accession>
<accession>O75902</accession>
<accession>Q5VX15</accession>
<accession>Q5VX18</accession>
<accession>Q5VX19</accession>
<dbReference type="EC" id="2.7.1.105" evidence="5 8 16 18"/>
<dbReference type="EC" id="3.1.3.46" evidence="16 17 18"/>
<dbReference type="EMBL" id="D49817">
    <property type="protein sequence ID" value="BAA08624.1"/>
    <property type="molecule type" value="mRNA"/>
</dbReference>
<dbReference type="EMBL" id="L77662">
    <property type="protein sequence ID" value="AAL40083.1"/>
    <property type="molecule type" value="mRNA"/>
</dbReference>
<dbReference type="EMBL" id="AF109735">
    <property type="protein sequence ID" value="AAD08818.1"/>
    <property type="molecule type" value="mRNA"/>
</dbReference>
<dbReference type="EMBL" id="AF041831">
    <property type="protein sequence ID" value="AAB99795.1"/>
    <property type="molecule type" value="Genomic_DNA"/>
</dbReference>
<dbReference type="EMBL" id="AF041823">
    <property type="protein sequence ID" value="AAB99795.1"/>
    <property type="status" value="JOINED"/>
    <property type="molecule type" value="Genomic_DNA"/>
</dbReference>
<dbReference type="EMBL" id="AF041824">
    <property type="protein sequence ID" value="AAB99795.1"/>
    <property type="status" value="JOINED"/>
    <property type="molecule type" value="Genomic_DNA"/>
</dbReference>
<dbReference type="EMBL" id="AF041825">
    <property type="protein sequence ID" value="AAB99795.1"/>
    <property type="status" value="JOINED"/>
    <property type="molecule type" value="Genomic_DNA"/>
</dbReference>
<dbReference type="EMBL" id="AF041826">
    <property type="protein sequence ID" value="AAB99795.1"/>
    <property type="status" value="JOINED"/>
    <property type="molecule type" value="Genomic_DNA"/>
</dbReference>
<dbReference type="EMBL" id="AF041827">
    <property type="protein sequence ID" value="AAB99795.1"/>
    <property type="status" value="JOINED"/>
    <property type="molecule type" value="Genomic_DNA"/>
</dbReference>
<dbReference type="EMBL" id="AF041828">
    <property type="protein sequence ID" value="AAB99795.1"/>
    <property type="status" value="JOINED"/>
    <property type="molecule type" value="Genomic_DNA"/>
</dbReference>
<dbReference type="EMBL" id="AF041829">
    <property type="protein sequence ID" value="AAB99795.1"/>
    <property type="status" value="JOINED"/>
    <property type="molecule type" value="Genomic_DNA"/>
</dbReference>
<dbReference type="EMBL" id="AF041830">
    <property type="protein sequence ID" value="AAB99795.1"/>
    <property type="status" value="JOINED"/>
    <property type="molecule type" value="Genomic_DNA"/>
</dbReference>
<dbReference type="EMBL" id="AF056320">
    <property type="protein sequence ID" value="AAC62000.1"/>
    <property type="molecule type" value="mRNA"/>
</dbReference>
<dbReference type="EMBL" id="AK291263">
    <property type="protein sequence ID" value="BAF83952.1"/>
    <property type="molecule type" value="mRNA"/>
</dbReference>
<dbReference type="EMBL" id="AK304450">
    <property type="protein sequence ID" value="BAH14191.1"/>
    <property type="molecule type" value="mRNA"/>
</dbReference>
<dbReference type="EMBL" id="AL359960">
    <property type="status" value="NOT_ANNOTATED_CDS"/>
    <property type="molecule type" value="Genomic_DNA"/>
</dbReference>
<dbReference type="EMBL" id="AL157395">
    <property type="status" value="NOT_ANNOTATED_CDS"/>
    <property type="molecule type" value="Genomic_DNA"/>
</dbReference>
<dbReference type="EMBL" id="CH471072">
    <property type="protein sequence ID" value="EAW86398.1"/>
    <property type="molecule type" value="Genomic_DNA"/>
</dbReference>
<dbReference type="EMBL" id="CH471072">
    <property type="protein sequence ID" value="EAW86399.1"/>
    <property type="molecule type" value="Genomic_DNA"/>
</dbReference>
<dbReference type="EMBL" id="BC040482">
    <property type="protein sequence ID" value="AAH40482.1"/>
    <property type="molecule type" value="mRNA"/>
</dbReference>
<dbReference type="CCDS" id="CCDS44353.1">
    <molecule id="Q16875-3"/>
</dbReference>
<dbReference type="CCDS" id="CCDS60479.1">
    <molecule id="Q16875-4"/>
</dbReference>
<dbReference type="CCDS" id="CCDS7078.1">
    <molecule id="Q16875-1"/>
</dbReference>
<dbReference type="CCDS" id="CCDS81439.1">
    <molecule id="Q16875-2"/>
</dbReference>
<dbReference type="PIR" id="JC4626">
    <property type="entry name" value="JC4626"/>
</dbReference>
<dbReference type="RefSeq" id="NP_001138915.1">
    <molecule id="Q16875-3"/>
    <property type="nucleotide sequence ID" value="NM_001145443.3"/>
</dbReference>
<dbReference type="RefSeq" id="NP_001269559.1">
    <molecule id="Q16875-4"/>
    <property type="nucleotide sequence ID" value="NM_001282630.3"/>
</dbReference>
<dbReference type="RefSeq" id="NP_001300992.1">
    <molecule id="Q16875-2"/>
    <property type="nucleotide sequence ID" value="NM_001314063.2"/>
</dbReference>
<dbReference type="RefSeq" id="NP_004557.1">
    <molecule id="Q16875-1"/>
    <property type="nucleotide sequence ID" value="NM_004566.4"/>
</dbReference>
<dbReference type="PDB" id="2AXN">
    <property type="method" value="X-ray"/>
    <property type="resolution" value="2.10 A"/>
    <property type="chains" value="A=1-520"/>
</dbReference>
<dbReference type="PDB" id="2DWO">
    <property type="method" value="X-ray"/>
    <property type="resolution" value="2.25 A"/>
    <property type="chains" value="A=1-520"/>
</dbReference>
<dbReference type="PDB" id="2DWP">
    <property type="method" value="X-ray"/>
    <property type="resolution" value="2.70 A"/>
    <property type="chains" value="A=1-520"/>
</dbReference>
<dbReference type="PDB" id="2I1V">
    <property type="method" value="X-ray"/>
    <property type="resolution" value="2.50 A"/>
    <property type="chains" value="B=1-520"/>
</dbReference>
<dbReference type="PDB" id="3QPU">
    <property type="method" value="X-ray"/>
    <property type="resolution" value="2.30 A"/>
    <property type="chains" value="A=1-520"/>
</dbReference>
<dbReference type="PDB" id="3QPV">
    <property type="method" value="X-ray"/>
    <property type="resolution" value="2.50 A"/>
    <property type="chains" value="A=1-520"/>
</dbReference>
<dbReference type="PDB" id="3QPW">
    <property type="method" value="X-ray"/>
    <property type="resolution" value="2.25 A"/>
    <property type="chains" value="A=1-520"/>
</dbReference>
<dbReference type="PDB" id="4D4J">
    <property type="method" value="X-ray"/>
    <property type="resolution" value="3.00 A"/>
    <property type="chains" value="A=1-449"/>
</dbReference>
<dbReference type="PDB" id="4D4K">
    <property type="method" value="X-ray"/>
    <property type="resolution" value="3.24 A"/>
    <property type="chains" value="A=1-449"/>
</dbReference>
<dbReference type="PDB" id="4D4L">
    <property type="method" value="X-ray"/>
    <property type="resolution" value="3.16 A"/>
    <property type="chains" value="A=1-449"/>
</dbReference>
<dbReference type="PDB" id="4D4M">
    <property type="method" value="X-ray"/>
    <property type="resolution" value="2.32 A"/>
    <property type="chains" value="A=1-449"/>
</dbReference>
<dbReference type="PDB" id="4MA4">
    <property type="method" value="X-ray"/>
    <property type="resolution" value="2.23 A"/>
    <property type="chains" value="A=1-520"/>
</dbReference>
<dbReference type="PDB" id="5AJV">
    <property type="method" value="X-ray"/>
    <property type="resolution" value="3.01 A"/>
    <property type="chains" value="B=1-520"/>
</dbReference>
<dbReference type="PDB" id="5AJW">
    <property type="method" value="X-ray"/>
    <property type="resolution" value="2.50 A"/>
    <property type="chains" value="A=1-520"/>
</dbReference>
<dbReference type="PDB" id="5AJX">
    <property type="method" value="X-ray"/>
    <property type="resolution" value="2.58 A"/>
    <property type="chains" value="A=1-520"/>
</dbReference>
<dbReference type="PDB" id="5AJY">
    <property type="method" value="X-ray"/>
    <property type="resolution" value="2.37 A"/>
    <property type="chains" value="A=1-520"/>
</dbReference>
<dbReference type="PDB" id="5AJZ">
    <property type="method" value="X-ray"/>
    <property type="resolution" value="2.35 A"/>
    <property type="chains" value="A=1-520"/>
</dbReference>
<dbReference type="PDB" id="5AK0">
    <property type="method" value="X-ray"/>
    <property type="resolution" value="2.03 A"/>
    <property type="chains" value="A=1-520"/>
</dbReference>
<dbReference type="PDB" id="6ETJ">
    <property type="method" value="X-ray"/>
    <property type="resolution" value="2.51 A"/>
    <property type="chains" value="A=1-520"/>
</dbReference>
<dbReference type="PDB" id="6HVH">
    <property type="method" value="X-ray"/>
    <property type="resolution" value="2.36 A"/>
    <property type="chains" value="A=1-520"/>
</dbReference>
<dbReference type="PDB" id="6HVI">
    <property type="method" value="X-ray"/>
    <property type="resolution" value="1.96 A"/>
    <property type="chains" value="A=1-520"/>
</dbReference>
<dbReference type="PDB" id="6HVJ">
    <property type="method" value="X-ray"/>
    <property type="resolution" value="2.28 A"/>
    <property type="chains" value="A=1-520"/>
</dbReference>
<dbReference type="PDB" id="6IBX">
    <property type="method" value="X-ray"/>
    <property type="resolution" value="2.11 A"/>
    <property type="chains" value="A=4-447"/>
</dbReference>
<dbReference type="PDB" id="6IBY">
    <property type="method" value="X-ray"/>
    <property type="resolution" value="2.51 A"/>
    <property type="chains" value="A=4-447"/>
</dbReference>
<dbReference type="PDB" id="6IBZ">
    <property type="method" value="X-ray"/>
    <property type="resolution" value="2.44 A"/>
    <property type="chains" value="A=4-447"/>
</dbReference>
<dbReference type="PDB" id="6IC0">
    <property type="method" value="X-ray"/>
    <property type="resolution" value="2.60 A"/>
    <property type="chains" value="A=4-446"/>
</dbReference>
<dbReference type="PDBsum" id="2AXN"/>
<dbReference type="PDBsum" id="2DWO"/>
<dbReference type="PDBsum" id="2DWP"/>
<dbReference type="PDBsum" id="2I1V"/>
<dbReference type="PDBsum" id="3QPU"/>
<dbReference type="PDBsum" id="3QPV"/>
<dbReference type="PDBsum" id="3QPW"/>
<dbReference type="PDBsum" id="4D4J"/>
<dbReference type="PDBsum" id="4D4K"/>
<dbReference type="PDBsum" id="4D4L"/>
<dbReference type="PDBsum" id="4D4M"/>
<dbReference type="PDBsum" id="4MA4"/>
<dbReference type="PDBsum" id="5AJV"/>
<dbReference type="PDBsum" id="5AJW"/>
<dbReference type="PDBsum" id="5AJX"/>
<dbReference type="PDBsum" id="5AJY"/>
<dbReference type="PDBsum" id="5AJZ"/>
<dbReference type="PDBsum" id="5AK0"/>
<dbReference type="PDBsum" id="6ETJ"/>
<dbReference type="PDBsum" id="6HVH"/>
<dbReference type="PDBsum" id="6HVI"/>
<dbReference type="PDBsum" id="6HVJ"/>
<dbReference type="PDBsum" id="6IBX"/>
<dbReference type="PDBsum" id="6IBY"/>
<dbReference type="PDBsum" id="6IBZ"/>
<dbReference type="PDBsum" id="6IC0"/>
<dbReference type="SMR" id="Q16875"/>
<dbReference type="BioGRID" id="111230">
    <property type="interactions" value="72"/>
</dbReference>
<dbReference type="ComplexPortal" id="CPX-1995">
    <property type="entry name" value="6-phosphofructo-2-kinase/fructose-2,6-biphosphatase 3 complex"/>
</dbReference>
<dbReference type="DIP" id="DIP-33964N"/>
<dbReference type="FunCoup" id="Q16875">
    <property type="interactions" value="2403"/>
</dbReference>
<dbReference type="IntAct" id="Q16875">
    <property type="interactions" value="33"/>
</dbReference>
<dbReference type="MINT" id="Q16875"/>
<dbReference type="STRING" id="9606.ENSP00000492001"/>
<dbReference type="BindingDB" id="Q16875"/>
<dbReference type="ChEMBL" id="CHEMBL2331053"/>
<dbReference type="GuidetoPHARMACOLOGY" id="2937"/>
<dbReference type="DEPOD" id="PFKFB3"/>
<dbReference type="GlyCosmos" id="Q16875">
    <property type="glycosylation" value="2 sites, 1 glycan"/>
</dbReference>
<dbReference type="GlyGen" id="Q16875">
    <property type="glycosylation" value="2 sites, 1 O-linked glycan (2 sites)"/>
</dbReference>
<dbReference type="iPTMnet" id="Q16875"/>
<dbReference type="PhosphoSitePlus" id="Q16875"/>
<dbReference type="BioMuta" id="PFKFB3"/>
<dbReference type="DMDM" id="3023733"/>
<dbReference type="jPOST" id="Q16875"/>
<dbReference type="MassIVE" id="Q16875"/>
<dbReference type="PaxDb" id="9606-ENSP00000443319"/>
<dbReference type="PeptideAtlas" id="Q16875"/>
<dbReference type="ProteomicsDB" id="61114">
    <molecule id="Q16875-1"/>
</dbReference>
<dbReference type="ProteomicsDB" id="61115">
    <molecule id="Q16875-2"/>
</dbReference>
<dbReference type="ProteomicsDB" id="65570"/>
<dbReference type="ProteomicsDB" id="7006"/>
<dbReference type="Pumba" id="Q16875"/>
<dbReference type="Antibodypedia" id="10861">
    <property type="antibodies" value="346 antibodies from 38 providers"/>
</dbReference>
<dbReference type="DNASU" id="5209"/>
<dbReference type="Ensembl" id="ENST00000360521.7">
    <molecule id="Q16875-2"/>
    <property type="protein sequence ID" value="ENSP00000353712.2"/>
    <property type="gene ID" value="ENSG00000170525.21"/>
</dbReference>
<dbReference type="Ensembl" id="ENST00000379775.9">
    <molecule id="Q16875-1"/>
    <property type="protein sequence ID" value="ENSP00000369100.4"/>
    <property type="gene ID" value="ENSG00000170525.21"/>
</dbReference>
<dbReference type="Ensembl" id="ENST00000379789.8">
    <molecule id="Q16875-3"/>
    <property type="protein sequence ID" value="ENSP00000369115.4"/>
    <property type="gene ID" value="ENSG00000170525.21"/>
</dbReference>
<dbReference type="Ensembl" id="ENST00000536985.6">
    <molecule id="Q16875-4"/>
    <property type="protein sequence ID" value="ENSP00000443319.2"/>
    <property type="gene ID" value="ENSG00000170525.21"/>
</dbReference>
<dbReference type="GeneID" id="5209"/>
<dbReference type="KEGG" id="hsa:5209"/>
<dbReference type="MANE-Select" id="ENST00000379775.9">
    <property type="protein sequence ID" value="ENSP00000369100.4"/>
    <property type="RefSeq nucleotide sequence ID" value="NM_004566.4"/>
    <property type="RefSeq protein sequence ID" value="NP_004557.1"/>
</dbReference>
<dbReference type="UCSC" id="uc001ijd.4">
    <molecule id="Q16875-1"/>
    <property type="organism name" value="human"/>
</dbReference>
<dbReference type="AGR" id="HGNC:8874"/>
<dbReference type="CTD" id="5209"/>
<dbReference type="DisGeNET" id="5209"/>
<dbReference type="GeneCards" id="PFKFB3"/>
<dbReference type="HGNC" id="HGNC:8874">
    <property type="gene designation" value="PFKFB3"/>
</dbReference>
<dbReference type="HPA" id="ENSG00000170525">
    <property type="expression patterns" value="Tissue enhanced (adipose tissue, skeletal muscle)"/>
</dbReference>
<dbReference type="MIM" id="605319">
    <property type="type" value="gene"/>
</dbReference>
<dbReference type="neXtProt" id="NX_Q16875"/>
<dbReference type="OpenTargets" id="ENSG00000170525"/>
<dbReference type="PharmGKB" id="PA33213"/>
<dbReference type="VEuPathDB" id="HostDB:ENSG00000170525"/>
<dbReference type="eggNOG" id="KOG0234">
    <property type="taxonomic scope" value="Eukaryota"/>
</dbReference>
<dbReference type="GeneTree" id="ENSGT00950000182835"/>
<dbReference type="InParanoid" id="Q16875"/>
<dbReference type="OMA" id="RCLMGYF"/>
<dbReference type="OrthoDB" id="267323at2759"/>
<dbReference type="PAN-GO" id="Q16875">
    <property type="GO annotations" value="4 GO annotations based on evolutionary models"/>
</dbReference>
<dbReference type="PhylomeDB" id="Q16875"/>
<dbReference type="TreeFam" id="TF313541"/>
<dbReference type="BioCyc" id="MetaCyc:HS10144-MONOMER"/>
<dbReference type="BRENDA" id="2.7.1.105">
    <property type="organism ID" value="2681"/>
</dbReference>
<dbReference type="BRENDA" id="3.1.3.46">
    <property type="organism ID" value="2681"/>
</dbReference>
<dbReference type="PathwayCommons" id="Q16875"/>
<dbReference type="Reactome" id="R-HSA-9634600">
    <property type="pathway name" value="Regulation of glycolysis by fructose 2,6-bisphosphate metabolism"/>
</dbReference>
<dbReference type="SABIO-RK" id="Q16875"/>
<dbReference type="SignaLink" id="Q16875"/>
<dbReference type="SIGNOR" id="Q16875"/>
<dbReference type="BioGRID-ORCS" id="5209">
    <property type="hits" value="14 hits in 1177 CRISPR screens"/>
</dbReference>
<dbReference type="ChiTaRS" id="PFKFB3">
    <property type="organism name" value="human"/>
</dbReference>
<dbReference type="EvolutionaryTrace" id="Q16875"/>
<dbReference type="GeneWiki" id="PFKFB3"/>
<dbReference type="GenomeRNAi" id="5209"/>
<dbReference type="Pharos" id="Q16875">
    <property type="development level" value="Tchem"/>
</dbReference>
<dbReference type="PRO" id="PR:Q16875"/>
<dbReference type="Proteomes" id="UP000005640">
    <property type="component" value="Chromosome 10"/>
</dbReference>
<dbReference type="RNAct" id="Q16875">
    <property type="molecule type" value="protein"/>
</dbReference>
<dbReference type="Bgee" id="ENSG00000170525">
    <property type="expression patterns" value="Expressed in pancreatic ductal cell and 194 other cell types or tissues"/>
</dbReference>
<dbReference type="ExpressionAtlas" id="Q16875">
    <property type="expression patterns" value="baseline and differential"/>
</dbReference>
<dbReference type="GO" id="GO:0005829">
    <property type="term" value="C:cytosol"/>
    <property type="evidence" value="ECO:0000318"/>
    <property type="project" value="GO_Central"/>
</dbReference>
<dbReference type="GO" id="GO:0005654">
    <property type="term" value="C:nucleoplasm"/>
    <property type="evidence" value="ECO:0000314"/>
    <property type="project" value="HPA"/>
</dbReference>
<dbReference type="GO" id="GO:0003873">
    <property type="term" value="F:6-phosphofructo-2-kinase activity"/>
    <property type="evidence" value="ECO:0000314"/>
    <property type="project" value="UniProtKB"/>
</dbReference>
<dbReference type="GO" id="GO:0005524">
    <property type="term" value="F:ATP binding"/>
    <property type="evidence" value="ECO:0007669"/>
    <property type="project" value="UniProtKB-KW"/>
</dbReference>
<dbReference type="GO" id="GO:0004331">
    <property type="term" value="F:fructose-2,6-bisphosphate 2-phosphatase activity"/>
    <property type="evidence" value="ECO:0000318"/>
    <property type="project" value="GO_Central"/>
</dbReference>
<dbReference type="GO" id="GO:0006915">
    <property type="term" value="P:apoptotic process"/>
    <property type="evidence" value="ECO:0007669"/>
    <property type="project" value="Ensembl"/>
</dbReference>
<dbReference type="GO" id="GO:0006003">
    <property type="term" value="P:fructose 2,6-bisphosphate metabolic process"/>
    <property type="evidence" value="ECO:0000318"/>
    <property type="project" value="GO_Central"/>
</dbReference>
<dbReference type="GO" id="GO:0006000">
    <property type="term" value="P:fructose metabolic process"/>
    <property type="evidence" value="ECO:0007669"/>
    <property type="project" value="InterPro"/>
</dbReference>
<dbReference type="GO" id="GO:0010001">
    <property type="term" value="P:glial cell differentiation"/>
    <property type="evidence" value="ECO:0007669"/>
    <property type="project" value="Ensembl"/>
</dbReference>
<dbReference type="GO" id="GO:0006096">
    <property type="term" value="P:glycolytic process"/>
    <property type="evidence" value="ECO:0007669"/>
    <property type="project" value="Ensembl"/>
</dbReference>
<dbReference type="GO" id="GO:0061744">
    <property type="term" value="P:motor behavior"/>
    <property type="evidence" value="ECO:0007669"/>
    <property type="project" value="Ensembl"/>
</dbReference>
<dbReference type="CDD" id="cd07067">
    <property type="entry name" value="HP_PGM_like"/>
    <property type="match status" value="1"/>
</dbReference>
<dbReference type="FunFam" id="3.40.50.1240:FF:000001">
    <property type="entry name" value="6-phosphofructo-2-kinase/fructose-2, 6-bisphosphatase 3 isoform 2"/>
    <property type="match status" value="1"/>
</dbReference>
<dbReference type="FunFam" id="3.40.50.300:FF:000047">
    <property type="entry name" value="6-phosphofructo-2-kinase/fructose-2, 6-bisphosphatase 3 isoform 2"/>
    <property type="match status" value="1"/>
</dbReference>
<dbReference type="Gene3D" id="3.40.50.300">
    <property type="entry name" value="P-loop containing nucleotide triphosphate hydrolases"/>
    <property type="match status" value="1"/>
</dbReference>
<dbReference type="Gene3D" id="3.40.50.1240">
    <property type="entry name" value="Phosphoglycerate mutase-like"/>
    <property type="match status" value="1"/>
</dbReference>
<dbReference type="InterPro" id="IPR003094">
    <property type="entry name" value="6Pfruct_kin"/>
</dbReference>
<dbReference type="InterPro" id="IPR013079">
    <property type="entry name" value="6Phosfructo_kin"/>
</dbReference>
<dbReference type="InterPro" id="IPR013078">
    <property type="entry name" value="His_Pase_superF_clade-1"/>
</dbReference>
<dbReference type="InterPro" id="IPR029033">
    <property type="entry name" value="His_PPase_superfam"/>
</dbReference>
<dbReference type="InterPro" id="IPR027417">
    <property type="entry name" value="P-loop_NTPase"/>
</dbReference>
<dbReference type="InterPro" id="IPR001345">
    <property type="entry name" value="PG/BPGM_mutase_AS"/>
</dbReference>
<dbReference type="PANTHER" id="PTHR10606">
    <property type="entry name" value="6-PHOSPHOFRUCTO-2-KINASE/FRUCTOSE-2,6-BISPHOSPHATASE"/>
    <property type="match status" value="1"/>
</dbReference>
<dbReference type="PANTHER" id="PTHR10606:SF41">
    <property type="entry name" value="6-PHOSPHOFRUCTO-2-KINASE_FRUCTOSE-2,6-BISPHOSPHATASE 3"/>
    <property type="match status" value="1"/>
</dbReference>
<dbReference type="Pfam" id="PF01591">
    <property type="entry name" value="6PF2K"/>
    <property type="match status" value="1"/>
</dbReference>
<dbReference type="Pfam" id="PF00300">
    <property type="entry name" value="His_Phos_1"/>
    <property type="match status" value="1"/>
</dbReference>
<dbReference type="PIRSF" id="PIRSF000709">
    <property type="entry name" value="6PFK_2-Ptase"/>
    <property type="match status" value="1"/>
</dbReference>
<dbReference type="PRINTS" id="PR00991">
    <property type="entry name" value="6PFRUCTKNASE"/>
</dbReference>
<dbReference type="SMART" id="SM00855">
    <property type="entry name" value="PGAM"/>
    <property type="match status" value="1"/>
</dbReference>
<dbReference type="SUPFAM" id="SSF52540">
    <property type="entry name" value="P-loop containing nucleoside triphosphate hydrolases"/>
    <property type="match status" value="1"/>
</dbReference>
<dbReference type="SUPFAM" id="SSF53254">
    <property type="entry name" value="Phosphoglycerate mutase-like"/>
    <property type="match status" value="1"/>
</dbReference>
<dbReference type="PROSITE" id="PS00175">
    <property type="entry name" value="PG_MUTASE"/>
    <property type="match status" value="1"/>
</dbReference>
<sequence>MPLELTQSRVQKIWVPVDHRPSLPRSCGPKLTNSPTVIVMVGLPARGKTYISKKLTRYLNWIGVPTKVFNVGEYRREAVKQYSSYNFFRPDNEEAMKVRKQCALAALRDVKSYLAKEGGQIAVFDATNTTRERRHMILHFAKENDFKAFFIESVCDDPTVVASNIMEVKISSPDYKDCNSAEAMDDFMKRISCYEASYQPLDPDKCDRDLSLIKVIDVGRRFLVNRVQDHIQSRIVYYLMNIHVQPRTIYLCRHGENEHNLQGRIGGDSGLSSRGKKFASALSKFVEEQNLKDLRVWTSQLKSTIQTAEALRLPYEQWKALNEIDAGVCEELTYEEIRDTYPEEYALREQDKYYYRYPTGESYQDLVQRLEPVIMELERQENVLVICHQAVLRCLLAYFLDKSAEEMPYLKCPLHTVLKLTPVAYGCRVESIYLNVESVCTHRERSEDAKKGPNPLMRRNSVTPLASPEPTKKPRINSFEEHVASTSAALPSCLPPEVPTQLPGQNMKGSRSSADSSRKH</sequence>
<protein>
    <recommendedName>
        <fullName>6-phosphofructo-2-kinase/fructose-2,6-bisphosphatase 3</fullName>
        <shortName>6PF-2-K/Fru-2,6-P2ase 3</shortName>
        <shortName>PFK/FBPase 3</shortName>
    </recommendedName>
    <alternativeName>
        <fullName>6PF-2-K/Fru-2,6-P2ase brain/placenta-type isozyme</fullName>
    </alternativeName>
    <alternativeName>
        <fullName>Renal carcinoma antigen NY-REN-56</fullName>
    </alternativeName>
    <alternativeName>
        <fullName>iPFK-2</fullName>
    </alternativeName>
    <domain>
        <recommendedName>
            <fullName>6-phosphofructo-2-kinase</fullName>
            <ecNumber evidence="5 8 16 18">2.7.1.105</ecNumber>
        </recommendedName>
    </domain>
    <domain>
        <recommendedName>
            <fullName>Fructose-2,6-bisphosphatase</fullName>
            <ecNumber evidence="16 17 18">3.1.3.46</ecNumber>
        </recommendedName>
    </domain>
</protein>
<reference key="1">
    <citation type="journal article" date="1996" name="J. Biochem.">
        <title>Cloning of cDNA encoding for a novel isozyme of fructose 6-phosphate, 2-kinase/fructose 2,6-bisphosphatase from human placenta.</title>
        <authorList>
            <person name="Sakai A."/>
            <person name="Kato M."/>
            <person name="Fukasawa M."/>
            <person name="Ishiguro M."/>
            <person name="Furuya E."/>
            <person name="Sakakibara R."/>
        </authorList>
    </citation>
    <scope>NUCLEOTIDE SEQUENCE [MRNA] (ISOFORM 1)</scope>
    <source>
        <tissue>Placenta</tissue>
    </source>
</reference>
<reference key="2">
    <citation type="journal article" date="1997" name="Chromosome Res.">
        <title>The third human isoform of 6-phosphofructo-2-kinase/fructose-2,6-bisphosphatase (PFKFB3) map position 10p14-p15.</title>
        <authorList>
            <person name="Nicholl J."/>
            <person name="Hamilton J.A."/>
            <person name="Sutherland G.R."/>
            <person name="Sutherland R.L."/>
            <person name="Watts C.K."/>
        </authorList>
    </citation>
    <scope>NUCLEOTIDE SEQUENCE [MRNA] (ISOFORM 1)</scope>
</reference>
<reference key="3">
    <citation type="journal article" date="1998" name="Cytogenet. Cell Genet.">
        <title>Molecular cloning, expression, and chromosomal localization of a ubiquitously expressed human 6-phosphofructo-2-kinase/ fructose-2, 6-bisphosphatase gene (PFKFB3).</title>
        <authorList>
            <person name="Manzano A."/>
            <person name="Rosa J.L."/>
            <person name="Ventura F."/>
            <person name="Perez J.X."/>
            <person name="Nadal M."/>
            <person name="Estivill X."/>
            <person name="Ambrosio S."/>
            <person name="Gil J."/>
            <person name="Bartrons R."/>
        </authorList>
    </citation>
    <scope>NUCLEOTIDE SEQUENCE [MRNA] (ISOFORM 1)</scope>
    <source>
        <tissue>Brain</tissue>
    </source>
</reference>
<reference key="4">
    <citation type="submission" date="1998-01" db="EMBL/GenBank/DDBJ databases">
        <title>Human brain 6-phosphofructo-2-kinase/fructose-2,6-bisphosphatase.</title>
        <authorList>
            <person name="El-Maghrabi M.R."/>
        </authorList>
    </citation>
    <scope>NUCLEOTIDE SEQUENCE [GENOMIC DNA] (ISOFORM 1)</scope>
    <source>
        <tissue>Brain</tissue>
    </source>
</reference>
<reference key="5">
    <citation type="journal article" date="1999" name="Proc. Natl. Acad. Sci. U.S.A.">
        <title>An inducible gene product for 6-phosphofructo-2-kinase with an AU-rich instability element: role in tumor cell glycolysis and the Warburg effect.</title>
        <authorList>
            <person name="Chesney J."/>
            <person name="Mitchell R.A."/>
            <person name="Benigni F."/>
            <person name="Bacher M."/>
            <person name="Spiegel L."/>
            <person name="Al-Abed Y."/>
            <person name="Han J.H."/>
            <person name="Metz C."/>
            <person name="Bucala R."/>
        </authorList>
    </citation>
    <scope>NUCLEOTIDE SEQUENCE [MRNA] (ISOFORM 2)</scope>
    <scope>FUNCTION</scope>
    <scope>CATALYTIC ACTIVITY</scope>
    <source>
        <tissue>Skeletal muscle</tissue>
    </source>
</reference>
<reference key="6">
    <citation type="journal article" date="2004" name="Nat. Genet.">
        <title>Complete sequencing and characterization of 21,243 full-length human cDNAs.</title>
        <authorList>
            <person name="Ota T."/>
            <person name="Suzuki Y."/>
            <person name="Nishikawa T."/>
            <person name="Otsuki T."/>
            <person name="Sugiyama T."/>
            <person name="Irie R."/>
            <person name="Wakamatsu A."/>
            <person name="Hayashi K."/>
            <person name="Sato H."/>
            <person name="Nagai K."/>
            <person name="Kimura K."/>
            <person name="Makita H."/>
            <person name="Sekine M."/>
            <person name="Obayashi M."/>
            <person name="Nishi T."/>
            <person name="Shibahara T."/>
            <person name="Tanaka T."/>
            <person name="Ishii S."/>
            <person name="Yamamoto J."/>
            <person name="Saito K."/>
            <person name="Kawai Y."/>
            <person name="Isono Y."/>
            <person name="Nakamura Y."/>
            <person name="Nagahari K."/>
            <person name="Murakami K."/>
            <person name="Yasuda T."/>
            <person name="Iwayanagi T."/>
            <person name="Wagatsuma M."/>
            <person name="Shiratori A."/>
            <person name="Sudo H."/>
            <person name="Hosoiri T."/>
            <person name="Kaku Y."/>
            <person name="Kodaira H."/>
            <person name="Kondo H."/>
            <person name="Sugawara M."/>
            <person name="Takahashi M."/>
            <person name="Kanda K."/>
            <person name="Yokoi T."/>
            <person name="Furuya T."/>
            <person name="Kikkawa E."/>
            <person name="Omura Y."/>
            <person name="Abe K."/>
            <person name="Kamihara K."/>
            <person name="Katsuta N."/>
            <person name="Sato K."/>
            <person name="Tanikawa M."/>
            <person name="Yamazaki M."/>
            <person name="Ninomiya K."/>
            <person name="Ishibashi T."/>
            <person name="Yamashita H."/>
            <person name="Murakawa K."/>
            <person name="Fujimori K."/>
            <person name="Tanai H."/>
            <person name="Kimata M."/>
            <person name="Watanabe M."/>
            <person name="Hiraoka S."/>
            <person name="Chiba Y."/>
            <person name="Ishida S."/>
            <person name="Ono Y."/>
            <person name="Takiguchi S."/>
            <person name="Watanabe S."/>
            <person name="Yosida M."/>
            <person name="Hotuta T."/>
            <person name="Kusano J."/>
            <person name="Kanehori K."/>
            <person name="Takahashi-Fujii A."/>
            <person name="Hara H."/>
            <person name="Tanase T.-O."/>
            <person name="Nomura Y."/>
            <person name="Togiya S."/>
            <person name="Komai F."/>
            <person name="Hara R."/>
            <person name="Takeuchi K."/>
            <person name="Arita M."/>
            <person name="Imose N."/>
            <person name="Musashino K."/>
            <person name="Yuuki H."/>
            <person name="Oshima A."/>
            <person name="Sasaki N."/>
            <person name="Aotsuka S."/>
            <person name="Yoshikawa Y."/>
            <person name="Matsunawa H."/>
            <person name="Ichihara T."/>
            <person name="Shiohata N."/>
            <person name="Sano S."/>
            <person name="Moriya S."/>
            <person name="Momiyama H."/>
            <person name="Satoh N."/>
            <person name="Takami S."/>
            <person name="Terashima Y."/>
            <person name="Suzuki O."/>
            <person name="Nakagawa S."/>
            <person name="Senoh A."/>
            <person name="Mizoguchi H."/>
            <person name="Goto Y."/>
            <person name="Shimizu F."/>
            <person name="Wakebe H."/>
            <person name="Hishigaki H."/>
            <person name="Watanabe T."/>
            <person name="Sugiyama A."/>
            <person name="Takemoto M."/>
            <person name="Kawakami B."/>
            <person name="Yamazaki M."/>
            <person name="Watanabe K."/>
            <person name="Kumagai A."/>
            <person name="Itakura S."/>
            <person name="Fukuzumi Y."/>
            <person name="Fujimori Y."/>
            <person name="Komiyama M."/>
            <person name="Tashiro H."/>
            <person name="Tanigami A."/>
            <person name="Fujiwara T."/>
            <person name="Ono T."/>
            <person name="Yamada K."/>
            <person name="Fujii Y."/>
            <person name="Ozaki K."/>
            <person name="Hirao M."/>
            <person name="Ohmori Y."/>
            <person name="Kawabata A."/>
            <person name="Hikiji T."/>
            <person name="Kobatake N."/>
            <person name="Inagaki H."/>
            <person name="Ikema Y."/>
            <person name="Okamoto S."/>
            <person name="Okitani R."/>
            <person name="Kawakami T."/>
            <person name="Noguchi S."/>
            <person name="Itoh T."/>
            <person name="Shigeta K."/>
            <person name="Senba T."/>
            <person name="Matsumura K."/>
            <person name="Nakajima Y."/>
            <person name="Mizuno T."/>
            <person name="Morinaga M."/>
            <person name="Sasaki M."/>
            <person name="Togashi T."/>
            <person name="Oyama M."/>
            <person name="Hata H."/>
            <person name="Watanabe M."/>
            <person name="Komatsu T."/>
            <person name="Mizushima-Sugano J."/>
            <person name="Satoh T."/>
            <person name="Shirai Y."/>
            <person name="Takahashi Y."/>
            <person name="Nakagawa K."/>
            <person name="Okumura K."/>
            <person name="Nagase T."/>
            <person name="Nomura N."/>
            <person name="Kikuchi H."/>
            <person name="Masuho Y."/>
            <person name="Yamashita R."/>
            <person name="Nakai K."/>
            <person name="Yada T."/>
            <person name="Nakamura Y."/>
            <person name="Ohara O."/>
            <person name="Isogai T."/>
            <person name="Sugano S."/>
        </authorList>
    </citation>
    <scope>NUCLEOTIDE SEQUENCE [LARGE SCALE MRNA] (ISOFORMS 1 AND 4)</scope>
    <source>
        <tissue>Trachea</tissue>
    </source>
</reference>
<reference key="7">
    <citation type="journal article" date="2004" name="Nature">
        <title>The DNA sequence and comparative analysis of human chromosome 10.</title>
        <authorList>
            <person name="Deloukas P."/>
            <person name="Earthrowl M.E."/>
            <person name="Grafham D.V."/>
            <person name="Rubenfield M."/>
            <person name="French L."/>
            <person name="Steward C.A."/>
            <person name="Sims S.K."/>
            <person name="Jones M.C."/>
            <person name="Searle S."/>
            <person name="Scott C."/>
            <person name="Howe K."/>
            <person name="Hunt S.E."/>
            <person name="Andrews T.D."/>
            <person name="Gilbert J.G.R."/>
            <person name="Swarbreck D."/>
            <person name="Ashurst J.L."/>
            <person name="Taylor A."/>
            <person name="Battles J."/>
            <person name="Bird C.P."/>
            <person name="Ainscough R."/>
            <person name="Almeida J.P."/>
            <person name="Ashwell R.I.S."/>
            <person name="Ambrose K.D."/>
            <person name="Babbage A.K."/>
            <person name="Bagguley C.L."/>
            <person name="Bailey J."/>
            <person name="Banerjee R."/>
            <person name="Bates K."/>
            <person name="Beasley H."/>
            <person name="Bray-Allen S."/>
            <person name="Brown A.J."/>
            <person name="Brown J.Y."/>
            <person name="Burford D.C."/>
            <person name="Burrill W."/>
            <person name="Burton J."/>
            <person name="Cahill P."/>
            <person name="Camire D."/>
            <person name="Carter N.P."/>
            <person name="Chapman J.C."/>
            <person name="Clark S.Y."/>
            <person name="Clarke G."/>
            <person name="Clee C.M."/>
            <person name="Clegg S."/>
            <person name="Corby N."/>
            <person name="Coulson A."/>
            <person name="Dhami P."/>
            <person name="Dutta I."/>
            <person name="Dunn M."/>
            <person name="Faulkner L."/>
            <person name="Frankish A."/>
            <person name="Frankland J.A."/>
            <person name="Garner P."/>
            <person name="Garnett J."/>
            <person name="Gribble S."/>
            <person name="Griffiths C."/>
            <person name="Grocock R."/>
            <person name="Gustafson E."/>
            <person name="Hammond S."/>
            <person name="Harley J.L."/>
            <person name="Hart E."/>
            <person name="Heath P.D."/>
            <person name="Ho T.P."/>
            <person name="Hopkins B."/>
            <person name="Horne J."/>
            <person name="Howden P.J."/>
            <person name="Huckle E."/>
            <person name="Hynds C."/>
            <person name="Johnson C."/>
            <person name="Johnson D."/>
            <person name="Kana A."/>
            <person name="Kay M."/>
            <person name="Kimberley A.M."/>
            <person name="Kershaw J.K."/>
            <person name="Kokkinaki M."/>
            <person name="Laird G.K."/>
            <person name="Lawlor S."/>
            <person name="Lee H.M."/>
            <person name="Leongamornlert D.A."/>
            <person name="Laird G."/>
            <person name="Lloyd C."/>
            <person name="Lloyd D.M."/>
            <person name="Loveland J."/>
            <person name="Lovell J."/>
            <person name="McLaren S."/>
            <person name="McLay K.E."/>
            <person name="McMurray A."/>
            <person name="Mashreghi-Mohammadi M."/>
            <person name="Matthews L."/>
            <person name="Milne S."/>
            <person name="Nickerson T."/>
            <person name="Nguyen M."/>
            <person name="Overton-Larty E."/>
            <person name="Palmer S.A."/>
            <person name="Pearce A.V."/>
            <person name="Peck A.I."/>
            <person name="Pelan S."/>
            <person name="Phillimore B."/>
            <person name="Porter K."/>
            <person name="Rice C.M."/>
            <person name="Rogosin A."/>
            <person name="Ross M.T."/>
            <person name="Sarafidou T."/>
            <person name="Sehra H.K."/>
            <person name="Shownkeen R."/>
            <person name="Skuce C.D."/>
            <person name="Smith M."/>
            <person name="Standring L."/>
            <person name="Sycamore N."/>
            <person name="Tester J."/>
            <person name="Thorpe A."/>
            <person name="Torcasso W."/>
            <person name="Tracey A."/>
            <person name="Tromans A."/>
            <person name="Tsolas J."/>
            <person name="Wall M."/>
            <person name="Walsh J."/>
            <person name="Wang H."/>
            <person name="Weinstock K."/>
            <person name="West A.P."/>
            <person name="Willey D.L."/>
            <person name="Whitehead S.L."/>
            <person name="Wilming L."/>
            <person name="Wray P.W."/>
            <person name="Young L."/>
            <person name="Chen Y."/>
            <person name="Lovering R.C."/>
            <person name="Moschonas N.K."/>
            <person name="Siebert R."/>
            <person name="Fechtel K."/>
            <person name="Bentley D."/>
            <person name="Durbin R.M."/>
            <person name="Hubbard T."/>
            <person name="Doucette-Stamm L."/>
            <person name="Beck S."/>
            <person name="Smith D.R."/>
            <person name="Rogers J."/>
        </authorList>
    </citation>
    <scope>NUCLEOTIDE SEQUENCE [LARGE SCALE GENOMIC DNA]</scope>
</reference>
<reference key="8">
    <citation type="submission" date="2005-09" db="EMBL/GenBank/DDBJ databases">
        <authorList>
            <person name="Mural R.J."/>
            <person name="Istrail S."/>
            <person name="Sutton G."/>
            <person name="Florea L."/>
            <person name="Halpern A.L."/>
            <person name="Mobarry C.M."/>
            <person name="Lippert R."/>
            <person name="Walenz B."/>
            <person name="Shatkay H."/>
            <person name="Dew I."/>
            <person name="Miller J.R."/>
            <person name="Flanigan M.J."/>
            <person name="Edwards N.J."/>
            <person name="Bolanos R."/>
            <person name="Fasulo D."/>
            <person name="Halldorsson B.V."/>
            <person name="Hannenhalli S."/>
            <person name="Turner R."/>
            <person name="Yooseph S."/>
            <person name="Lu F."/>
            <person name="Nusskern D.R."/>
            <person name="Shue B.C."/>
            <person name="Zheng X.H."/>
            <person name="Zhong F."/>
            <person name="Delcher A.L."/>
            <person name="Huson D.H."/>
            <person name="Kravitz S.A."/>
            <person name="Mouchard L."/>
            <person name="Reinert K."/>
            <person name="Remington K.A."/>
            <person name="Clark A.G."/>
            <person name="Waterman M.S."/>
            <person name="Eichler E.E."/>
            <person name="Adams M.D."/>
            <person name="Hunkapiller M.W."/>
            <person name="Myers E.W."/>
            <person name="Venter J.C."/>
        </authorList>
    </citation>
    <scope>NUCLEOTIDE SEQUENCE [LARGE SCALE GENOMIC DNA]</scope>
</reference>
<reference key="9">
    <citation type="journal article" date="2004" name="Genome Res.">
        <title>The status, quality, and expansion of the NIH full-length cDNA project: the Mammalian Gene Collection (MGC).</title>
        <authorList>
            <consortium name="The MGC Project Team"/>
        </authorList>
    </citation>
    <scope>NUCLEOTIDE SEQUENCE [LARGE SCALE MRNA] (ISOFORM 1)</scope>
    <source>
        <tissue>Testis</tissue>
    </source>
</reference>
<reference key="10">
    <citation type="journal article" date="1999" name="Int. J. Cancer">
        <title>Antigens recognized by autologous antibody in patients with renal-cell carcinoma.</title>
        <authorList>
            <person name="Scanlan M.J."/>
            <person name="Gordan J.D."/>
            <person name="Williamson B."/>
            <person name="Stockert E."/>
            <person name="Bander N.H."/>
            <person name="Jongeneel C.V."/>
            <person name="Gure A.O."/>
            <person name="Jaeger D."/>
            <person name="Jaeger E."/>
            <person name="Knuth A."/>
            <person name="Chen Y.-T."/>
            <person name="Old L.J."/>
        </authorList>
    </citation>
    <scope>IDENTIFICATION AS A RENAL CANCER ANTIGEN</scope>
    <source>
        <tissue>Renal cell carcinoma</tissue>
    </source>
</reference>
<reference key="11">
    <citation type="journal article" date="2002" name="J. Biol. Chem.">
        <title>The stimulation of glycolysis by hypoxia in activated monocytes is mediated by AMP-activated protein kinase and inducible 6-phosphofructo-2-kinase.</title>
        <authorList>
            <person name="Marsin A.S."/>
            <person name="Bouzin C."/>
            <person name="Bertrand L."/>
            <person name="Hue L."/>
        </authorList>
    </citation>
    <scope>PHOSPHORYLATION AT SER-461</scope>
</reference>
<reference key="12">
    <citation type="journal article" date="2008" name="Proc. Natl. Acad. Sci. U.S.A.">
        <title>A quantitative atlas of mitotic phosphorylation.</title>
        <authorList>
            <person name="Dephoure N."/>
            <person name="Zhou C."/>
            <person name="Villen J."/>
            <person name="Beausoleil S.A."/>
            <person name="Bakalarski C.E."/>
            <person name="Elledge S.J."/>
            <person name="Gygi S.P."/>
        </authorList>
    </citation>
    <scope>PHOSPHORYLATION [LARGE SCALE ANALYSIS] AT SER-461; THR-463 AND SER-467</scope>
    <scope>IDENTIFICATION BY MASS SPECTROMETRY [LARGE SCALE ANALYSIS]</scope>
    <source>
        <tissue>Cervix carcinoma</tissue>
    </source>
</reference>
<reference key="13">
    <citation type="journal article" date="2009" name="Sci. Signal.">
        <title>Quantitative phosphoproteomic analysis of T cell receptor signaling reveals system-wide modulation of protein-protein interactions.</title>
        <authorList>
            <person name="Mayya V."/>
            <person name="Lundgren D.H."/>
            <person name="Hwang S.-I."/>
            <person name="Rezaul K."/>
            <person name="Wu L."/>
            <person name="Eng J.K."/>
            <person name="Rodionov V."/>
            <person name="Han D.K."/>
        </authorList>
    </citation>
    <scope>PHOSPHORYLATION [LARGE SCALE ANALYSIS] AT SER-461 AND SER-467</scope>
    <scope>IDENTIFICATION BY MASS SPECTROMETRY [LARGE SCALE ANALYSIS]</scope>
    <source>
        <tissue>Leukemic T-cell</tissue>
    </source>
</reference>
<reference key="14">
    <citation type="journal article" date="2010" name="Sci. Signal.">
        <title>Quantitative phosphoproteomics reveals widespread full phosphorylation site occupancy during mitosis.</title>
        <authorList>
            <person name="Olsen J.V."/>
            <person name="Vermeulen M."/>
            <person name="Santamaria A."/>
            <person name="Kumar C."/>
            <person name="Miller M.L."/>
            <person name="Jensen L.J."/>
            <person name="Gnad F."/>
            <person name="Cox J."/>
            <person name="Jensen T.S."/>
            <person name="Nigg E.A."/>
            <person name="Brunak S."/>
            <person name="Mann M."/>
        </authorList>
    </citation>
    <scope>PHOSPHORYLATION [LARGE SCALE ANALYSIS] AT SER-461 AND SER-467</scope>
    <scope>IDENTIFICATION BY MASS SPECTROMETRY [LARGE SCALE ANALYSIS]</scope>
    <source>
        <tissue>Cervix carcinoma</tissue>
    </source>
</reference>
<reference key="15">
    <citation type="journal article" date="2013" name="J. Proteome Res.">
        <title>Toward a comprehensive characterization of a human cancer cell phosphoproteome.</title>
        <authorList>
            <person name="Zhou H."/>
            <person name="Di Palma S."/>
            <person name="Preisinger C."/>
            <person name="Peng M."/>
            <person name="Polat A.N."/>
            <person name="Heck A.J."/>
            <person name="Mohammed S."/>
        </authorList>
    </citation>
    <scope>PHOSPHORYLATION [LARGE SCALE ANALYSIS] AT SER-461</scope>
    <scope>IDENTIFICATION BY MASS SPECTROMETRY [LARGE SCALE ANALYSIS]</scope>
    <source>
        <tissue>Cervix carcinoma</tissue>
        <tissue>Erythroleukemia</tissue>
    </source>
</reference>
<reference key="16">
    <citation type="journal article" date="2022" name="Nat. Commun.">
        <title>BRAF activation by metabolic stress promotes glycolysis sensitizing NRASQ61-mutated melanomas to targeted therapy.</title>
        <authorList>
            <person name="McGrail K."/>
            <person name="Granado-Martinez P."/>
            <person name="Esteve-Puig R."/>
            <person name="Garcia-Ortega S."/>
            <person name="Ding Y."/>
            <person name="Sanchez-Redondo S."/>
            <person name="Ferrer B."/>
            <person name="Hernandez-Losa J."/>
            <person name="Canals F."/>
            <person name="Manzano A."/>
            <person name="Navarro-Sabate A."/>
            <person name="Bartrons R."/>
            <person name="Yanes O."/>
            <person name="Perez-Alea M."/>
            <person name="Munoz-Couselo E."/>
            <person name="Garcia-Patos V."/>
            <person name="Recio J.A."/>
        </authorList>
    </citation>
    <scope>INTERACTION WITH PFKFB2</scope>
</reference>
<reference key="17">
    <citation type="journal article" date="2006" name="J. Biol. Chem.">
        <title>Crystal structure of the hypoxia-inducible form of 6-phosphofructo-2-kinase/fructose-2,6-bisphosphatase (PFKFB3): a possible new target for cancer therapy.</title>
        <authorList>
            <person name="Kim S.G."/>
            <person name="Manes N.P."/>
            <person name="El-Maghrabi M.R."/>
            <person name="Lee Y.H."/>
        </authorList>
    </citation>
    <scope>X-RAY CRYSTALLOGRAPHY (2.10 ANGSTROMS) IN COMPLEX WITH ADP AND FRUCTOSE 6-PHOSPHATE</scope>
    <scope>SUBUNIT</scope>
    <scope>FUNCTION</scope>
    <scope>CATALYTIC ACTIVITY</scope>
</reference>
<reference key="18">
    <citation type="journal article" date="2007" name="J. Mol. Biol.">
        <title>A direct substrate-substrate interaction found in the kinase domain of the bifunctional enzyme, 6-phosphofructo-2-kinase/fructose-2,6-bisphosphatase.</title>
        <authorList>
            <person name="Kim S.G."/>
            <person name="Cavalier M."/>
            <person name="El-Maghrabi M.R."/>
            <person name="Lee Y.H."/>
        </authorList>
    </citation>
    <scope>X-RAY CRYSTALLOGRAPHY (2.25 ANGSTROMS) IN COMPLEXES WITH ADP; ATP; FRUCTOSE 6-PHOSPHATE; FRUCTOSE-2,6-BISPHOSPHATE AND PHOSPHOENOLPYRUVATE</scope>
    <scope>FUNCTION</scope>
    <scope>CATALYTIC ACTIVITY</scope>
    <scope>BIOPHYSICOCHEMICAL PROPERTIES</scope>
    <scope>MUTAGENESIS OF ALA-45 AND LYS-169</scope>
</reference>
<reference key="19">
    <citation type="journal article" date="2012" name="Proteins">
        <title>Molecular basis of the fructose-2,6-bisphosphatase reaction of PFKFB3: transition state and the C-terminal function.</title>
        <authorList>
            <person name="Cavalier M.C."/>
            <person name="Kim S.G."/>
            <person name="Neau D."/>
            <person name="Lee Y.H."/>
        </authorList>
    </citation>
    <scope>X-RAY CRYSTALLOGRAPHY (2.25 ANGSTROMS)</scope>
    <scope>ACTIVE SITE</scope>
    <scope>FUNCTION</scope>
    <scope>CATALYTIC ACTIVITY</scope>
</reference>
<reference key="20">
    <citation type="journal article" date="2015" name="J. Med. Chem.">
        <title>Structure-based design of potent and selective inhibitors of the metabolic kinase PFKFB3.</title>
        <authorList>
            <person name="Boyd S."/>
            <person name="Brookfield J.L."/>
            <person name="Critchlow S.E."/>
            <person name="Cumming I.A."/>
            <person name="Curtis N.J."/>
            <person name="Debreczeni J."/>
            <person name="Degorce S.L."/>
            <person name="Donald C."/>
            <person name="Evans N.J."/>
            <person name="Groombridge S."/>
            <person name="Hopcroft P."/>
            <person name="Jones N.P."/>
            <person name="Kettle J.G."/>
            <person name="Lamont S."/>
            <person name="Lewis H.J."/>
            <person name="MacFaull P."/>
            <person name="McLoughlin S.B."/>
            <person name="Rigoreau L.J."/>
            <person name="Smith J.M."/>
            <person name="St-Gallay S."/>
            <person name="Stock J.K."/>
            <person name="Turnbull A.P."/>
            <person name="Wheatley E.R."/>
            <person name="Winter J."/>
            <person name="Wingfield J."/>
        </authorList>
    </citation>
    <scope>X-RAY CRYSTALLOGRAPHY (2.03 ANGSTROMS) IN COMPLEX WITH FRUCTOSE-2,6-BISPHOSPHATE</scope>
</reference>
<keyword id="KW-0002">3D-structure</keyword>
<keyword id="KW-0025">Alternative splicing</keyword>
<keyword id="KW-0067">ATP-binding</keyword>
<keyword id="KW-0378">Hydrolase</keyword>
<keyword id="KW-0418">Kinase</keyword>
<keyword id="KW-0511">Multifunctional enzyme</keyword>
<keyword id="KW-0547">Nucleotide-binding</keyword>
<keyword id="KW-0597">Phosphoprotein</keyword>
<keyword id="KW-1267">Proteomics identification</keyword>
<keyword id="KW-1185">Reference proteome</keyword>
<keyword id="KW-0808">Transferase</keyword>
<gene>
    <name type="primary">PFKFB3</name>
</gene>
<organism>
    <name type="scientific">Homo sapiens</name>
    <name type="common">Human</name>
    <dbReference type="NCBI Taxonomy" id="9606"/>
    <lineage>
        <taxon>Eukaryota</taxon>
        <taxon>Metazoa</taxon>
        <taxon>Chordata</taxon>
        <taxon>Craniata</taxon>
        <taxon>Vertebrata</taxon>
        <taxon>Euteleostomi</taxon>
        <taxon>Mammalia</taxon>
        <taxon>Eutheria</taxon>
        <taxon>Euarchontoglires</taxon>
        <taxon>Primates</taxon>
        <taxon>Haplorrhini</taxon>
        <taxon>Catarrhini</taxon>
        <taxon>Hominidae</taxon>
        <taxon>Homo</taxon>
    </lineage>
</organism>